<feature type="chain" id="PRO_1000120979" description="Large ribosomal subunit protein uL10">
    <location>
        <begin position="1"/>
        <end position="166"/>
    </location>
</feature>
<comment type="function">
    <text evidence="1">Forms part of the ribosomal stalk, playing a central role in the interaction of the ribosome with GTP-bound translation factors.</text>
</comment>
<comment type="subunit">
    <text evidence="1">Part of the ribosomal stalk of the 50S ribosomal subunit. The N-terminus interacts with L11 and the large rRNA to form the base of the stalk. The C-terminus forms an elongated spine to which L12 dimers bind in a sequential fashion forming a multimeric L10(L12)X complex.</text>
</comment>
<comment type="similarity">
    <text evidence="1">Belongs to the universal ribosomal protein uL10 family.</text>
</comment>
<evidence type="ECO:0000255" key="1">
    <source>
        <dbReference type="HAMAP-Rule" id="MF_00362"/>
    </source>
</evidence>
<evidence type="ECO:0000305" key="2"/>
<sequence>MSEAAIAKKAEIVKQTTDMLNAAQSAIVVDYRGLTVAEVTDLRKQLRDAGIQMSVIKNKILDRAVEGTDYEDLRSTFVGPTAVAFSDEDPIAPAKILKKFADDHDALEIKGGFIEKSVKTLDEINEYANMPGREELLSMLASALQDPMRKIARAVKAIADKEDEAA</sequence>
<dbReference type="EMBL" id="AP007281">
    <property type="protein sequence ID" value="BAG24818.1"/>
    <property type="molecule type" value="Genomic_DNA"/>
</dbReference>
<dbReference type="RefSeq" id="WP_003666309.1">
    <property type="nucleotide sequence ID" value="NC_010609.1"/>
</dbReference>
<dbReference type="SMR" id="B2G5T6"/>
<dbReference type="GeneID" id="77190117"/>
<dbReference type="KEGG" id="lrf:LAR_0302"/>
<dbReference type="HOGENOM" id="CLU_092227_2_0_9"/>
<dbReference type="GO" id="GO:0015934">
    <property type="term" value="C:large ribosomal subunit"/>
    <property type="evidence" value="ECO:0007669"/>
    <property type="project" value="InterPro"/>
</dbReference>
<dbReference type="GO" id="GO:0070180">
    <property type="term" value="F:large ribosomal subunit rRNA binding"/>
    <property type="evidence" value="ECO:0007669"/>
    <property type="project" value="UniProtKB-UniRule"/>
</dbReference>
<dbReference type="GO" id="GO:0003735">
    <property type="term" value="F:structural constituent of ribosome"/>
    <property type="evidence" value="ECO:0007669"/>
    <property type="project" value="InterPro"/>
</dbReference>
<dbReference type="GO" id="GO:0006412">
    <property type="term" value="P:translation"/>
    <property type="evidence" value="ECO:0007669"/>
    <property type="project" value="UniProtKB-UniRule"/>
</dbReference>
<dbReference type="CDD" id="cd05797">
    <property type="entry name" value="Ribosomal_L10"/>
    <property type="match status" value="1"/>
</dbReference>
<dbReference type="Gene3D" id="3.30.70.1730">
    <property type="match status" value="1"/>
</dbReference>
<dbReference type="HAMAP" id="MF_00362">
    <property type="entry name" value="Ribosomal_uL10"/>
    <property type="match status" value="1"/>
</dbReference>
<dbReference type="InterPro" id="IPR001790">
    <property type="entry name" value="Ribosomal_uL10"/>
</dbReference>
<dbReference type="InterPro" id="IPR043141">
    <property type="entry name" value="Ribosomal_uL10-like_sf"/>
</dbReference>
<dbReference type="InterPro" id="IPR022973">
    <property type="entry name" value="Ribosomal_uL10_bac"/>
</dbReference>
<dbReference type="InterPro" id="IPR047865">
    <property type="entry name" value="Ribosomal_uL10_bac_type"/>
</dbReference>
<dbReference type="InterPro" id="IPR002363">
    <property type="entry name" value="Ribosomal_uL10_CS_bac"/>
</dbReference>
<dbReference type="NCBIfam" id="NF000955">
    <property type="entry name" value="PRK00099.1-1"/>
    <property type="match status" value="1"/>
</dbReference>
<dbReference type="PANTHER" id="PTHR11560">
    <property type="entry name" value="39S RIBOSOMAL PROTEIN L10, MITOCHONDRIAL"/>
    <property type="match status" value="1"/>
</dbReference>
<dbReference type="Pfam" id="PF00466">
    <property type="entry name" value="Ribosomal_L10"/>
    <property type="match status" value="1"/>
</dbReference>
<dbReference type="SUPFAM" id="SSF160369">
    <property type="entry name" value="Ribosomal protein L10-like"/>
    <property type="match status" value="1"/>
</dbReference>
<dbReference type="PROSITE" id="PS01109">
    <property type="entry name" value="RIBOSOMAL_L10"/>
    <property type="match status" value="1"/>
</dbReference>
<keyword id="KW-0687">Ribonucleoprotein</keyword>
<keyword id="KW-0689">Ribosomal protein</keyword>
<keyword id="KW-0694">RNA-binding</keyword>
<keyword id="KW-0699">rRNA-binding</keyword>
<protein>
    <recommendedName>
        <fullName evidence="1">Large ribosomal subunit protein uL10</fullName>
    </recommendedName>
    <alternativeName>
        <fullName evidence="2">50S ribosomal protein L10</fullName>
    </alternativeName>
</protein>
<proteinExistence type="inferred from homology"/>
<accession>B2G5T6</accession>
<name>RL10_LIMRJ</name>
<reference key="1">
    <citation type="journal article" date="2008" name="DNA Res.">
        <title>Comparative genome analysis of Lactobacillus reuteri and Lactobacillus fermentum reveal a genomic island for reuterin and cobalamin production.</title>
        <authorList>
            <person name="Morita H."/>
            <person name="Toh H."/>
            <person name="Fukuda S."/>
            <person name="Horikawa H."/>
            <person name="Oshima K."/>
            <person name="Suzuki T."/>
            <person name="Murakami M."/>
            <person name="Hisamatsu S."/>
            <person name="Kato Y."/>
            <person name="Takizawa T."/>
            <person name="Fukuoka H."/>
            <person name="Yoshimura T."/>
            <person name="Itoh K."/>
            <person name="O'Sullivan D.J."/>
            <person name="McKay L.L."/>
            <person name="Ohno H."/>
            <person name="Kikuchi J."/>
            <person name="Masaoka T."/>
            <person name="Hattori M."/>
        </authorList>
    </citation>
    <scope>NUCLEOTIDE SEQUENCE [LARGE SCALE GENOMIC DNA]</scope>
    <source>
        <strain>JCM 1112</strain>
    </source>
</reference>
<gene>
    <name evidence="1" type="primary">rplJ</name>
    <name type="ordered locus">LAR_0302</name>
</gene>
<organism>
    <name type="scientific">Limosilactobacillus reuteri subsp. reuteri (strain JCM 1112)</name>
    <name type="common">Lactobacillus reuteri</name>
    <dbReference type="NCBI Taxonomy" id="557433"/>
    <lineage>
        <taxon>Bacteria</taxon>
        <taxon>Bacillati</taxon>
        <taxon>Bacillota</taxon>
        <taxon>Bacilli</taxon>
        <taxon>Lactobacillales</taxon>
        <taxon>Lactobacillaceae</taxon>
        <taxon>Limosilactobacillus</taxon>
    </lineage>
</organism>